<feature type="chain" id="PRO_0000055991" description="Polycomb group RING finger protein 6">
    <location>
        <begin position="1"/>
        <end position="351"/>
    </location>
</feature>
<feature type="zinc finger region" description="RING-type" evidence="3">
    <location>
        <begin position="135"/>
        <end position="174"/>
    </location>
</feature>
<feature type="region of interest" description="Disordered" evidence="4">
    <location>
        <begin position="1"/>
        <end position="114"/>
    </location>
</feature>
<feature type="coiled-coil region" evidence="2">
    <location>
        <begin position="69"/>
        <end position="110"/>
    </location>
</feature>
<feature type="compositionally biased region" description="Basic and acidic residues" evidence="4">
    <location>
        <begin position="9"/>
        <end position="19"/>
    </location>
</feature>
<feature type="compositionally biased region" description="Pro residues" evidence="4">
    <location>
        <begin position="24"/>
        <end position="37"/>
    </location>
</feature>
<feature type="compositionally biased region" description="Low complexity" evidence="4">
    <location>
        <begin position="38"/>
        <end position="51"/>
    </location>
</feature>
<feature type="compositionally biased region" description="Basic and acidic residues" evidence="4">
    <location>
        <begin position="62"/>
        <end position="80"/>
    </location>
</feature>
<feature type="compositionally biased region" description="Acidic residues" evidence="4">
    <location>
        <begin position="81"/>
        <end position="101"/>
    </location>
</feature>
<feature type="modified residue" description="Phosphoserine" evidence="1">
    <location>
        <position position="32"/>
    </location>
</feature>
<feature type="modified residue" description="Phosphoserine" evidence="1">
    <location>
        <position position="116"/>
    </location>
</feature>
<feature type="cross-link" description="Glycyl lysine isopeptide (Lys-Gly) (interchain with G-Cter in SUMO2)" evidence="1">
    <location>
        <position position="224"/>
    </location>
</feature>
<feature type="cross-link" description="Glycyl lysine isopeptide (Lys-Gly) (interchain with G-Cter in SUMO2)" evidence="1">
    <location>
        <position position="235"/>
    </location>
</feature>
<proteinExistence type="evidence at transcript level"/>
<protein>
    <recommendedName>
        <fullName>Polycomb group RING finger protein 6</fullName>
    </recommendedName>
    <alternativeName>
        <fullName>RING finger protein 134</fullName>
    </alternativeName>
</protein>
<evidence type="ECO:0000250" key="1">
    <source>
        <dbReference type="UniProtKB" id="Q9BYE7"/>
    </source>
</evidence>
<evidence type="ECO:0000255" key="2"/>
<evidence type="ECO:0000255" key="3">
    <source>
        <dbReference type="PROSITE-ProRule" id="PRU00175"/>
    </source>
</evidence>
<evidence type="ECO:0000256" key="4">
    <source>
        <dbReference type="SAM" id="MobiDB-lite"/>
    </source>
</evidence>
<accession>Q5XI70</accession>
<name>PCGF6_RAT</name>
<gene>
    <name type="primary">Pcgf6</name>
    <name type="synonym">Rnf134</name>
</gene>
<organism>
    <name type="scientific">Rattus norvegicus</name>
    <name type="common">Rat</name>
    <dbReference type="NCBI Taxonomy" id="10116"/>
    <lineage>
        <taxon>Eukaryota</taxon>
        <taxon>Metazoa</taxon>
        <taxon>Chordata</taxon>
        <taxon>Craniata</taxon>
        <taxon>Vertebrata</taxon>
        <taxon>Euteleostomi</taxon>
        <taxon>Mammalia</taxon>
        <taxon>Eutheria</taxon>
        <taxon>Euarchontoglires</taxon>
        <taxon>Glires</taxon>
        <taxon>Rodentia</taxon>
        <taxon>Myomorpha</taxon>
        <taxon>Muroidea</taxon>
        <taxon>Muridae</taxon>
        <taxon>Murinae</taxon>
        <taxon>Rattus</taxon>
    </lineage>
</organism>
<keyword id="KW-0175">Coiled coil</keyword>
<keyword id="KW-1017">Isopeptide bond</keyword>
<keyword id="KW-0479">Metal-binding</keyword>
<keyword id="KW-0539">Nucleus</keyword>
<keyword id="KW-0597">Phosphoprotein</keyword>
<keyword id="KW-1185">Reference proteome</keyword>
<keyword id="KW-0678">Repressor</keyword>
<keyword id="KW-0804">Transcription</keyword>
<keyword id="KW-0805">Transcription regulation</keyword>
<keyword id="KW-0832">Ubl conjugation</keyword>
<keyword id="KW-0862">Zinc</keyword>
<keyword id="KW-0863">Zinc-finger</keyword>
<sequence>MEEAETDATENKRASEAKRASAMLPPPPPPISPPALIPAPAAGEEGPASLAQAGAPGCSRSRPPELEPERSLGRLRGRFEDYDEELEEDEEMEEEEEEEEEMSHFSLRLESGRADSEDEEERLINLVELTPYILCSICKGYLIDATTITECLHTFCKSCIVRHFYYSNRCPKCNIVVHQTQPLYNIRLDRQLQDIVYKLVVNLEEREKKQMHDFYKERGLEVPKPAVPQPVPASKGRTKKALESVFRIPPELDVSLLLEFIGANEDTGHFKPLEKKFVRVSGEATIGHVEKFLRRKMGLDPACQVDIICGDHLLERYQTLREIRRAIGDTAMQDGLLVLHYGLVVSPLKIT</sequence>
<dbReference type="EMBL" id="BC083820">
    <property type="protein sequence ID" value="AAH83820.1"/>
    <property type="molecule type" value="mRNA"/>
</dbReference>
<dbReference type="RefSeq" id="NP_001013172.1">
    <property type="nucleotide sequence ID" value="NM_001013154.1"/>
</dbReference>
<dbReference type="BMRB" id="Q5XI70"/>
<dbReference type="SMR" id="Q5XI70"/>
<dbReference type="FunCoup" id="Q5XI70">
    <property type="interactions" value="923"/>
</dbReference>
<dbReference type="STRING" id="10116.ENSRNOP00000027450"/>
<dbReference type="PhosphoSitePlus" id="Q5XI70"/>
<dbReference type="PaxDb" id="10116-ENSRNOP00000027450"/>
<dbReference type="GeneID" id="309457"/>
<dbReference type="KEGG" id="rno:309457"/>
<dbReference type="UCSC" id="RGD:1306904">
    <property type="organism name" value="rat"/>
</dbReference>
<dbReference type="AGR" id="RGD:1306904"/>
<dbReference type="CTD" id="84108"/>
<dbReference type="RGD" id="1306904">
    <property type="gene designation" value="Pcgf6"/>
</dbReference>
<dbReference type="VEuPathDB" id="HostDB:ENSRNOG00000020250"/>
<dbReference type="eggNOG" id="KOG2660">
    <property type="taxonomic scope" value="Eukaryota"/>
</dbReference>
<dbReference type="HOGENOM" id="CLU_046427_4_0_1"/>
<dbReference type="InParanoid" id="Q5XI70"/>
<dbReference type="OrthoDB" id="1305878at2759"/>
<dbReference type="PhylomeDB" id="Q5XI70"/>
<dbReference type="TreeFam" id="TF324206"/>
<dbReference type="Reactome" id="R-RNO-8953750">
    <property type="pathway name" value="Transcriptional Regulation by E2F6"/>
</dbReference>
<dbReference type="PRO" id="PR:Q5XI70"/>
<dbReference type="Proteomes" id="UP000002494">
    <property type="component" value="Chromosome 1"/>
</dbReference>
<dbReference type="Bgee" id="ENSRNOG00000020250">
    <property type="expression patterns" value="Expressed in testis and 20 other cell types or tissues"/>
</dbReference>
<dbReference type="GO" id="GO:0005634">
    <property type="term" value="C:nucleus"/>
    <property type="evidence" value="ECO:0000266"/>
    <property type="project" value="RGD"/>
</dbReference>
<dbReference type="GO" id="GO:0031519">
    <property type="term" value="C:PcG protein complex"/>
    <property type="evidence" value="ECO:0000250"/>
    <property type="project" value="UniProtKB"/>
</dbReference>
<dbReference type="GO" id="GO:0035102">
    <property type="term" value="C:PRC1 complex"/>
    <property type="evidence" value="ECO:0000250"/>
    <property type="project" value="UniProtKB"/>
</dbReference>
<dbReference type="GO" id="GO:0008270">
    <property type="term" value="F:zinc ion binding"/>
    <property type="evidence" value="ECO:0007669"/>
    <property type="project" value="UniProtKB-KW"/>
</dbReference>
<dbReference type="GO" id="GO:0006338">
    <property type="term" value="P:chromatin remodeling"/>
    <property type="evidence" value="ECO:0000250"/>
    <property type="project" value="UniProtKB"/>
</dbReference>
<dbReference type="GO" id="GO:0045892">
    <property type="term" value="P:negative regulation of DNA-templated transcription"/>
    <property type="evidence" value="ECO:0000266"/>
    <property type="project" value="RGD"/>
</dbReference>
<dbReference type="GO" id="GO:0000122">
    <property type="term" value="P:negative regulation of transcription by RNA polymerase II"/>
    <property type="evidence" value="ECO:0000266"/>
    <property type="project" value="RGD"/>
</dbReference>
<dbReference type="GO" id="GO:0006357">
    <property type="term" value="P:regulation of transcription by RNA polymerase II"/>
    <property type="evidence" value="ECO:0000318"/>
    <property type="project" value="GO_Central"/>
</dbReference>
<dbReference type="CDD" id="cd17085">
    <property type="entry name" value="RAWUL_PCGF6"/>
    <property type="match status" value="1"/>
</dbReference>
<dbReference type="CDD" id="cd16738">
    <property type="entry name" value="RING-HC_PCGF6"/>
    <property type="match status" value="1"/>
</dbReference>
<dbReference type="FunFam" id="3.30.40.10:FF:000033">
    <property type="entry name" value="Polycomb group RING finger protein 3"/>
    <property type="match status" value="1"/>
</dbReference>
<dbReference type="FunFam" id="3.10.20.90:FF:000193">
    <property type="entry name" value="Polycomb group RING finger protein 6"/>
    <property type="match status" value="1"/>
</dbReference>
<dbReference type="Gene3D" id="3.10.20.90">
    <property type="entry name" value="Phosphatidylinositol 3-kinase Catalytic Subunit, Chain A, domain 1"/>
    <property type="match status" value="1"/>
</dbReference>
<dbReference type="Gene3D" id="3.30.40.10">
    <property type="entry name" value="Zinc/RING finger domain, C3HC4 (zinc finger)"/>
    <property type="match status" value="1"/>
</dbReference>
<dbReference type="InterPro" id="IPR051507">
    <property type="entry name" value="PcG_RING_finger"/>
</dbReference>
<dbReference type="InterPro" id="IPR046979">
    <property type="entry name" value="PCGF6_RAWUL"/>
</dbReference>
<dbReference type="InterPro" id="IPR038037">
    <property type="entry name" value="PCGF6_RING-HC"/>
</dbReference>
<dbReference type="InterPro" id="IPR032443">
    <property type="entry name" value="RAWUL"/>
</dbReference>
<dbReference type="InterPro" id="IPR029071">
    <property type="entry name" value="Ubiquitin-like_domsf"/>
</dbReference>
<dbReference type="InterPro" id="IPR001841">
    <property type="entry name" value="Znf_RING"/>
</dbReference>
<dbReference type="InterPro" id="IPR013083">
    <property type="entry name" value="Znf_RING/FYVE/PHD"/>
</dbReference>
<dbReference type="InterPro" id="IPR017907">
    <property type="entry name" value="Znf_RING_CS"/>
</dbReference>
<dbReference type="PANTHER" id="PTHR45893">
    <property type="entry name" value="POLYCOMB GROUP RING FINGER PROTEIN"/>
    <property type="match status" value="1"/>
</dbReference>
<dbReference type="Pfam" id="PF16207">
    <property type="entry name" value="RAWUL"/>
    <property type="match status" value="1"/>
</dbReference>
<dbReference type="Pfam" id="PF13923">
    <property type="entry name" value="zf-C3HC4_2"/>
    <property type="match status" value="1"/>
</dbReference>
<dbReference type="SMART" id="SM00184">
    <property type="entry name" value="RING"/>
    <property type="match status" value="1"/>
</dbReference>
<dbReference type="SUPFAM" id="SSF57850">
    <property type="entry name" value="RING/U-box"/>
    <property type="match status" value="1"/>
</dbReference>
<dbReference type="SUPFAM" id="SSF54236">
    <property type="entry name" value="Ubiquitin-like"/>
    <property type="match status" value="1"/>
</dbReference>
<dbReference type="PROSITE" id="PS00518">
    <property type="entry name" value="ZF_RING_1"/>
    <property type="match status" value="1"/>
</dbReference>
<dbReference type="PROSITE" id="PS50089">
    <property type="entry name" value="ZF_RING_2"/>
    <property type="match status" value="1"/>
</dbReference>
<comment type="function">
    <text evidence="1">Transcriptional repressor. May modulate the levels of histone H3K4Me3 by activating KDM5D histone demethylase. Component of a Polycomb group (PcG) multiprotein PRC1-like complex, a complex class required to maintain the transcriptionally repressive state of many genes, including Hox genes, throughout development. PcG PRC1 complex acts via chromatin remodeling and modification of histones; it mediates monoubiquitination of histone H2A 'Lys-119', rendering chromatin heritably changed in its expressibility. Within the PRC1-like complex, regulates RNF2 ubiquitin ligase activity.</text>
</comment>
<comment type="subunit">
    <text evidence="1">Component of a PRC1-like complex. Interacts with BMI1/PCGF4, RING1 and RNF2. Interacts with KDM5D. Interacts with CBX4, CBX6, CBX7 and CBX8.</text>
</comment>
<comment type="subcellular location">
    <subcellularLocation>
        <location evidence="1">Nucleus</location>
    </subcellularLocation>
</comment>
<comment type="PTM">
    <text evidence="1">Phosphorylated during mitosis.</text>
</comment>
<reference key="1">
    <citation type="journal article" date="2004" name="Genome Res.">
        <title>The status, quality, and expansion of the NIH full-length cDNA project: the Mammalian Gene Collection (MGC).</title>
        <authorList>
            <consortium name="The MGC Project Team"/>
        </authorList>
    </citation>
    <scope>NUCLEOTIDE SEQUENCE [LARGE SCALE MRNA]</scope>
    <source>
        <tissue>Testis</tissue>
    </source>
</reference>